<accession>P27636</accession>
<accession>D6VPM6</accession>
<reference key="1">
    <citation type="journal article" date="1992" name="Mol. Gen. Genet.">
        <title>NPK1, a nonessential protein kinase gene in Saccharomyces cerevisiae with similarity to Aspergillus nidulans nimA.</title>
        <authorList>
            <person name="Schweitzer B."/>
            <person name="Philippsen P."/>
        </authorList>
    </citation>
    <scope>NUCLEOTIDE SEQUENCE [GENOMIC DNA]</scope>
</reference>
<reference key="2">
    <citation type="journal article" date="1991" name="Yeast">
        <title>CDC15, an essential cell cycle gene in Saccharomyces cerevisiae, encodes a protein kinase domain.</title>
        <authorList>
            <person name="Schweitzer B."/>
            <person name="Philippsen P."/>
        </authorList>
    </citation>
    <scope>NUCLEOTIDE SEQUENCE [GENOMIC DNA]</scope>
    <source>
        <strain>S288c / GRF88</strain>
    </source>
</reference>
<reference key="3">
    <citation type="submission" date="1993-05" db="EMBL/GenBank/DDBJ databases">
        <authorList>
            <person name="Schweitzer B."/>
        </authorList>
    </citation>
    <scope>SEQUENCE REVISION TO 900-902</scope>
</reference>
<reference key="4">
    <citation type="journal article" date="1994" name="Yeast">
        <title>Sequencing of chromosome I of Saccharomyces cerevisiae: analysis of the 42 kbp SPO7-CENI-CDC15 region.</title>
        <authorList>
            <person name="Clark M.W."/>
            <person name="Keng T."/>
            <person name="Storms R.K."/>
            <person name="Zhong W.-W."/>
            <person name="Fortin N."/>
            <person name="Zeng B."/>
            <person name="Delaney S."/>
            <person name="Ouellette B.F.F."/>
            <person name="Barton A.B."/>
            <person name="Kaback D.B."/>
            <person name="Bussey H."/>
        </authorList>
    </citation>
    <scope>NUCLEOTIDE SEQUENCE [GENOMIC DNA]</scope>
    <source>
        <strain>ATCC 204511 / S288c / AB972</strain>
    </source>
</reference>
<reference key="5">
    <citation type="journal article" date="1995" name="Proc. Natl. Acad. Sci. U.S.A.">
        <title>The nucleotide sequence of chromosome I from Saccharomyces cerevisiae.</title>
        <authorList>
            <person name="Bussey H."/>
            <person name="Kaback D.B."/>
            <person name="Zhong W.-W."/>
            <person name="Vo D.H."/>
            <person name="Clark M.W."/>
            <person name="Fortin N."/>
            <person name="Hall J."/>
            <person name="Ouellette B.F.F."/>
            <person name="Keng T."/>
            <person name="Barton A.B."/>
            <person name="Su Y."/>
            <person name="Davies C.J."/>
            <person name="Storms R.K."/>
        </authorList>
    </citation>
    <scope>NUCLEOTIDE SEQUENCE [LARGE SCALE GENOMIC DNA]</scope>
    <source>
        <strain>ATCC 204508 / S288c</strain>
    </source>
</reference>
<reference key="6">
    <citation type="journal article" date="2014" name="G3 (Bethesda)">
        <title>The reference genome sequence of Saccharomyces cerevisiae: Then and now.</title>
        <authorList>
            <person name="Engel S.R."/>
            <person name="Dietrich F.S."/>
            <person name="Fisk D.G."/>
            <person name="Binkley G."/>
            <person name="Balakrishnan R."/>
            <person name="Costanzo M.C."/>
            <person name="Dwight S.S."/>
            <person name="Hitz B.C."/>
            <person name="Karra K."/>
            <person name="Nash R.S."/>
            <person name="Weng S."/>
            <person name="Wong E.D."/>
            <person name="Lloyd P."/>
            <person name="Skrzypek M.S."/>
            <person name="Miyasato S.R."/>
            <person name="Simison M."/>
            <person name="Cherry J.M."/>
        </authorList>
    </citation>
    <scope>GENOME REANNOTATION</scope>
    <scope>SEQUENCE REVISION TO 316; 321 AND 900-902</scope>
    <source>
        <strain>ATCC 204508 / S288c</strain>
    </source>
</reference>
<reference key="7">
    <citation type="journal article" date="1991" name="Nucleic Acids Res.">
        <title>A directed DNA sequencing strategy based upon Tn3 transposon mutagenesis: application to the ADE1 locus on Saccharomyces cerevisiae chromosome I.</title>
        <authorList>
            <person name="Davies C.J."/>
            <person name="Hutchison C.A. III"/>
        </authorList>
    </citation>
    <scope>NUCLEOTIDE SEQUENCE [GENOMIC DNA] OF 865-974</scope>
</reference>
<reference key="8">
    <citation type="journal article" date="1993" name="EMBO J.">
        <title>Destruction of the CDC28/CLB mitotic kinase is not required for the metaphase to anaphase transition in budding yeast.</title>
        <authorList>
            <person name="Surana U."/>
            <person name="Amon A."/>
            <person name="Dowzer C."/>
            <person name="McGrew J."/>
            <person name="Byers B."/>
            <person name="Nasmyth K."/>
        </authorList>
    </citation>
    <scope>FUNCTION</scope>
</reference>
<reference key="9">
    <citation type="journal article" date="1993" name="J. Bacteriol.">
        <title>A cdc-like autolytic Saccharomyces cerevisiae mutant altered in budding site selection is complemented by SPO12, a sporulation gene.</title>
        <authorList>
            <person name="Molero G."/>
            <person name="Yuste-Rojas M."/>
            <person name="Montesi A."/>
            <person name="Vazquez A."/>
            <person name="Nombela C."/>
            <person name="Sanchez M."/>
        </authorList>
    </citation>
    <scope>FUNCTION</scope>
</reference>
<reference key="10">
    <citation type="journal article" date="1994" name="J. Cell Biol.">
        <title>Chromosome condensation and sister chromatid pairing in budding yeast.</title>
        <authorList>
            <person name="Guacci V."/>
            <person name="Hogan E."/>
            <person name="Koshland D."/>
        </authorList>
    </citation>
    <scope>FUNCTION</scope>
</reference>
<reference key="11">
    <citation type="journal article" date="1996" name="Mol. Gen. Genet.">
        <title>Dominant mutant alleles of yeast protein kinase gene CDC15 suppress the lte1 defect in termination of M phase and genetically interact with CDC14.</title>
        <authorList>
            <person name="Shirayama M."/>
            <person name="Matsui Y."/>
            <person name="Toh-e A."/>
        </authorList>
    </citation>
    <scope>FUNCTION</scope>
</reference>
<reference key="12">
    <citation type="journal article" date="1999" name="Exp. Cell Res.">
        <title>Chromosome separation and exit from mitosis in budding yeast: dependence on growth revealed by cAMP-mediated inhibition.</title>
        <authorList>
            <person name="Anghileri P."/>
            <person name="Branduardi P."/>
            <person name="Sternieri F."/>
            <person name="Monti P."/>
            <person name="Visintin R."/>
            <person name="Bevilacqua A."/>
            <person name="Alberghina L."/>
            <person name="Martegani E."/>
            <person name="Baroni M.D."/>
        </authorList>
    </citation>
    <scope>FUNCTION</scope>
</reference>
<reference key="13">
    <citation type="journal article" date="1999" name="Mol. Cell Biol. Res. Commun.">
        <title>The budding yeast Cdc15 localizes to the spindle pole body in a cell-cycle-dependent manner.</title>
        <authorList>
            <person name="Cenamor R."/>
            <person name="Jimenez J."/>
            <person name="Cid V.J."/>
            <person name="Nombela C."/>
            <person name="Sanchez M."/>
        </authorList>
    </citation>
    <scope>SUBCELLULAR LOCATION</scope>
</reference>
<reference key="14">
    <citation type="journal article" date="2000" name="Curr. Biol.">
        <title>Phosphorylation and spindle pole body localization of the Cdc15p mitotic regulatory protein kinase in budding yeast.</title>
        <authorList>
            <person name="Xu S."/>
            <person name="Huang H.K."/>
            <person name="Kaiser P."/>
            <person name="Latterich M."/>
            <person name="Hunter T."/>
        </authorList>
    </citation>
    <scope>PHOSPHORYLATION</scope>
    <scope>DEPHOSPHORYLATION BY CDC14</scope>
    <scope>SUBCELLULAR LOCATION</scope>
    <scope>FUNCTION</scope>
</reference>
<reference key="15">
    <citation type="journal article" date="2001" name="Curr. Biol.">
        <title>Asymmetric spindle pole localization of yeast Cdc15 kinase links mitotic exit and cytokinesis.</title>
        <authorList>
            <person name="Menssen R."/>
            <person name="Neutzner A."/>
            <person name="Seufert W."/>
        </authorList>
    </citation>
    <scope>PHOSPHORYLATION</scope>
    <scope>DEPHOSPHORYLATION BY CDC14</scope>
    <scope>SUBCELLULAR LOCATION</scope>
    <scope>FUNCTION</scope>
</reference>
<reference key="16">
    <citation type="journal article" date="2000" name="Curr. Biol.">
        <title>Cdc14 activates cdc15 to promote mitotic exit in budding yeast.</title>
        <authorList>
            <person name="Jaspersen S.L."/>
            <person name="Morgan D.O."/>
        </authorList>
    </citation>
    <scope>PHOSPHORYLATION</scope>
    <scope>DEPHOSPHORYLATION BY CDC14</scope>
    <scope>ACTIVITY REGULATION</scope>
</reference>
<reference key="17">
    <citation type="journal article" date="2001" name="Curr. Biol.">
        <title>Order of function of the budding-yeast mitotic exit-network proteins Tem1, Cdc15, Mob1, Dbf2, and Cdc5.</title>
        <authorList>
            <person name="Lee S.E."/>
            <person name="Frenz L.M."/>
            <person name="Wells N.J."/>
            <person name="Johnson A.L."/>
            <person name="Johnston L.H."/>
        </authorList>
    </citation>
    <scope>FUNCTION</scope>
    <scope>SUBCELLULAR LOCATION</scope>
</reference>
<reference key="18">
    <citation type="journal article" date="2001" name="Genetics">
        <title>A novel functional domain of Cdc15 kinase is required for its interaction with Tem1 GTPase in Saccharomyces cerevisiae.</title>
        <authorList>
            <person name="Asakawa K."/>
            <person name="Yoshida S."/>
            <person name="Otake F."/>
            <person name="Toh-e A."/>
        </authorList>
    </citation>
    <scope>INTERACTION WITH TEM1</scope>
    <scope>FUNCTION</scope>
</reference>
<reference key="19">
    <citation type="journal article" date="2001" name="Mol. Biol. Cell">
        <title>Regulation of the mitotic exit protein kinases Cdc15 and Dbf2.</title>
        <authorList>
            <person name="Visintin R."/>
            <person name="Amon A."/>
        </authorList>
    </citation>
    <scope>SUBCELLULAR LOCATION</scope>
    <scope>FUNCTION</scope>
</reference>
<reference key="20">
    <citation type="journal article" date="2001" name="Proc. Natl. Acad. Sci. U.S.A.">
        <title>Protein kinase Cdc15 activates the Dbf2-Mob1 kinase complex.</title>
        <authorList>
            <person name="Mah A.S."/>
            <person name="Jang J."/>
            <person name="Deshaies R.J."/>
        </authorList>
    </citation>
    <scope>FUNCTION</scope>
</reference>
<reference key="21">
    <citation type="journal article" date="2003" name="Mol. Biol. Cell">
        <title>Inactivation of mitotic kinase triggers translocation of MEN components to mother-daughter neck in yeast.</title>
        <authorList>
            <person name="Hwa Lim H."/>
            <person name="Yeong F.M."/>
            <person name="Surana U."/>
        </authorList>
    </citation>
    <scope>FUNCTION</scope>
</reference>
<reference key="22">
    <citation type="journal article" date="2003" name="Mol. Cell. Biol.">
        <title>Mitotic exit regulation through distinct domains within the protein kinase Cdc15.</title>
        <authorList>
            <person name="Bardin A.J."/>
            <person name="Boselli M.G."/>
            <person name="Amon A."/>
        </authorList>
    </citation>
    <scope>FUNCTION</scope>
    <scope>SUBUNIT</scope>
    <scope>DOMAIN</scope>
</reference>
<reference key="23">
    <citation type="journal article" date="2003" name="Nature">
        <title>Global analysis of protein localization in budding yeast.</title>
        <authorList>
            <person name="Huh W.-K."/>
            <person name="Falvo J.V."/>
            <person name="Gerke L.C."/>
            <person name="Carroll A.S."/>
            <person name="Howson R.W."/>
            <person name="Weissman J.S."/>
            <person name="O'Shea E.K."/>
        </authorList>
    </citation>
    <scope>SUBCELLULAR LOCATION [LARGE SCALE ANALYSIS]</scope>
</reference>
<reference key="24">
    <citation type="journal article" date="2003" name="Nature">
        <title>Global analysis of protein expression in yeast.</title>
        <authorList>
            <person name="Ghaemmaghami S."/>
            <person name="Huh W.-K."/>
            <person name="Bower K."/>
            <person name="Howson R.W."/>
            <person name="Belle A."/>
            <person name="Dephoure N."/>
            <person name="O'Shea E.K."/>
            <person name="Weissman J.S."/>
        </authorList>
    </citation>
    <scope>LEVEL OF PROTEIN EXPRESSION [LARGE SCALE ANALYSIS]</scope>
</reference>
<reference key="25">
    <citation type="journal article" date="2004" name="Mol. Biol. Cell">
        <title>The differential roles of budding yeast Tem1p, Cdc15p, and Bub2p protein dynamics in mitotic exit.</title>
        <authorList>
            <person name="Molk J.N."/>
            <person name="Schuyler S.C."/>
            <person name="Liu J.Y."/>
            <person name="Evans J.G."/>
            <person name="Salmon E.D."/>
            <person name="Pellman D."/>
            <person name="Bloom K."/>
        </authorList>
    </citation>
    <scope>SUBCELLULAR LOCATION</scope>
</reference>
<reference key="26">
    <citation type="journal article" date="2007" name="Genetics">
        <title>Cdc15 is required for spore morphogenesis independently of Cdc14 in Saccharomyces cerevisiae.</title>
        <authorList>
            <person name="Pablo-Hernando M.E."/>
            <person name="Arnaiz-Pita Y."/>
            <person name="Nakanishi H."/>
            <person name="Dawson D."/>
            <person name="del Rey F."/>
            <person name="Neiman A.M."/>
            <person name="Vazquez de Aldana C.R."/>
        </authorList>
    </citation>
    <scope>FUNCTION</scope>
</reference>
<reference key="27">
    <citation type="journal article" date="2007" name="J. Proteome Res.">
        <title>Large-scale phosphorylation analysis of alpha-factor-arrested Saccharomyces cerevisiae.</title>
        <authorList>
            <person name="Li X."/>
            <person name="Gerber S.A."/>
            <person name="Rudner A.D."/>
            <person name="Beausoleil S.A."/>
            <person name="Haas W."/>
            <person name="Villen J."/>
            <person name="Elias J.E."/>
            <person name="Gygi S.P."/>
        </authorList>
    </citation>
    <scope>IDENTIFICATION BY MASS SPECTROMETRY [LARGE SCALE ANALYSIS]</scope>
    <source>
        <strain>ADR376</strain>
    </source>
</reference>
<reference key="28">
    <citation type="journal article" date="2008" name="Mol. Cell. Proteomics">
        <title>A multidimensional chromatography technology for in-depth phosphoproteome analysis.</title>
        <authorList>
            <person name="Albuquerque C.P."/>
            <person name="Smolka M.B."/>
            <person name="Payne S.H."/>
            <person name="Bafna V."/>
            <person name="Eng J."/>
            <person name="Zhou H."/>
        </authorList>
    </citation>
    <scope>IDENTIFICATION BY MASS SPECTROMETRY [LARGE SCALE ANALYSIS]</scope>
</reference>
<reference key="29">
    <citation type="journal article" date="2009" name="Science">
        <title>Global analysis of Cdk1 substrate phosphorylation sites provides insights into evolution.</title>
        <authorList>
            <person name="Holt L.J."/>
            <person name="Tuch B.B."/>
            <person name="Villen J."/>
            <person name="Johnson A.D."/>
            <person name="Gygi S.P."/>
            <person name="Morgan D.O."/>
        </authorList>
    </citation>
    <scope>PHOSPHORYLATION [LARGE SCALE ANALYSIS] AT SER-567</scope>
    <scope>IDENTIFICATION BY MASS SPECTROMETRY [LARGE SCALE ANALYSIS]</scope>
</reference>
<reference key="30">
    <citation type="journal article" date="2010" name="Cell Cycle">
        <title>Cell cycle-dependent phosphorylation of Rad53 kinase by Cdc5 and Cdc28 modulates checkpoint adaptation.</title>
        <authorList>
            <person name="Schleker T."/>
            <person name="Shimada K."/>
            <person name="Sack R."/>
            <person name="Pike B.L."/>
            <person name="Gasser S.M."/>
        </authorList>
    </citation>
    <scope>FUNCTION</scope>
</reference>
<reference key="31">
    <citation type="journal article" date="2010" name="J. Cell Biol.">
        <title>Mutual regulation of cyclin-dependent kinase and the mitotic exit network.</title>
        <authorList>
            <person name="Konig C."/>
            <person name="Maekawa H."/>
            <person name="Schiebel E."/>
        </authorList>
    </citation>
    <scope>SUBCELLULAR LOCATION</scope>
    <scope>PHOSPHORYLATION BY CDK1</scope>
    <scope>FUNCTION</scope>
</reference>
<reference key="32">
    <citation type="journal article" date="2010" name="J. Cell Sci.">
        <title>Targeted localization of Inn1, Cyk3 and Chs2 by the mitotic-exit network regulates cytokinesis in budding yeast.</title>
        <authorList>
            <person name="Meitinger F."/>
            <person name="Petrova B."/>
            <person name="Lombardi I.M."/>
            <person name="Bertazzi D.T."/>
            <person name="Hub B."/>
            <person name="Zentgraf H."/>
            <person name="Pereira G."/>
        </authorList>
    </citation>
    <scope>FUNCTION</scope>
</reference>
<reference key="33">
    <citation type="journal article" date="2010" name="Mol. Biol. Cell">
        <title>Unrestrained spindle elongation during recovery from spindle checkpoint activation in cdc15-2 cells results in mis-segregation of chromosomes.</title>
        <authorList>
            <person name="Chai C.C."/>
            <person name="Teh E.M."/>
            <person name="Yeong F.M."/>
        </authorList>
    </citation>
    <scope>FUNCTION</scope>
</reference>
<reference key="34">
    <citation type="journal article" date="2011" name="Cell Cycle">
        <title>Cell cycle phosphorylation of mitotic exit network (MEN) proteins.</title>
        <authorList>
            <person name="Jones M.H."/>
            <person name="Keck J.M."/>
            <person name="Wong C.C."/>
            <person name="Xu T."/>
            <person name="Yates J.R. III"/>
            <person name="Winey M."/>
        </authorList>
    </citation>
    <scope>PHOSPHORYLATION AT SER-561; SER-567 AND THR-870</scope>
</reference>
<reference key="35">
    <citation type="journal article" date="2011" name="Genes Dev.">
        <title>Cdc15 integrates Tem1 GTPase-mediated spatial signals with Polo kinase-mediated temporal cues to activate mitotic exit.</title>
        <authorList>
            <person name="Rock J.M."/>
            <person name="Amon A."/>
        </authorList>
    </citation>
    <scope>FUNCTION</scope>
    <scope>SUBCELLULAR LOCATION</scope>
</reference>
<reference key="36">
    <citation type="journal article" date="2011" name="Proc. Natl. Acad. Sci. U.S.A.">
        <title>Independent modulation of the kinase and polo-box activities of Cdc5 protein unravels unique roles in the maintenance of genome stability.</title>
        <authorList>
            <person name="Ratsima H."/>
            <person name="Ladouceur A.M."/>
            <person name="Pascariu M."/>
            <person name="Sauve V."/>
            <person name="Salloum Z."/>
            <person name="Maddox P.S."/>
            <person name="D'Amours D."/>
        </authorList>
    </citation>
    <scope>FUNCTION</scope>
</reference>
<reference key="37">
    <citation type="journal article" date="2012" name="Cell">
        <title>Spindle pole bodies exploit the mitotic exit network in metaphase to drive their age-dependent segregation.</title>
        <authorList>
            <person name="Hotz M."/>
            <person name="Leisner C."/>
            <person name="Chen D."/>
            <person name="Manatschal C."/>
            <person name="Wegleiter T."/>
            <person name="Ouellet J."/>
            <person name="Lindstrom D."/>
            <person name="Gottschling D.E."/>
            <person name="Vogel J."/>
            <person name="Barral Y."/>
        </authorList>
    </citation>
    <scope>FUNCTION</scope>
</reference>
<reference key="38">
    <citation type="journal article" date="2012" name="Mol. Biol. Cell">
        <title>Control of the mitotic exit network during meiosis.</title>
        <authorList>
            <person name="Attner M.A."/>
            <person name="Amon A."/>
        </authorList>
    </citation>
    <scope>FUNCTION</scope>
</reference>
<reference key="39">
    <citation type="journal article" date="2013" name="Cell Cycle">
        <title>Measurement and modeling of transcriptional noise in the cell cycle regulatory network.</title>
        <authorList>
            <person name="Ball D.A."/>
            <person name="Adames N.R."/>
            <person name="Reischmann N."/>
            <person name="Barik D."/>
            <person name="Franck C.T."/>
            <person name="Tyson J.J."/>
            <person name="Peccoud J."/>
        </authorList>
    </citation>
    <scope>INDUCTION</scope>
</reference>
<reference key="40">
    <citation type="journal article" date="2013" name="PLoS ONE">
        <title>The FEAR protein Slk19 restricts Cdc14 phosphatase to the nucleus until the end of anaphase, regulating its participation in mitotic exit in Saccharomyces cerevisiae.</title>
        <authorList>
            <person name="Faust A.M."/>
            <person name="Wong C.C."/>
            <person name="Yates Iii J.R."/>
            <person name="Drubin D.G."/>
            <person name="Barnes G."/>
        </authorList>
    </citation>
    <scope>FUNCTION</scope>
</reference>
<keyword id="KW-0067">ATP-binding</keyword>
<keyword id="KW-0131">Cell cycle</keyword>
<keyword id="KW-0132">Cell division</keyword>
<keyword id="KW-0963">Cytoplasm</keyword>
<keyword id="KW-0206">Cytoskeleton</keyword>
<keyword id="KW-0418">Kinase</keyword>
<keyword id="KW-0498">Mitosis</keyword>
<keyword id="KW-0547">Nucleotide-binding</keyword>
<keyword id="KW-0597">Phosphoprotein</keyword>
<keyword id="KW-1185">Reference proteome</keyword>
<keyword id="KW-0723">Serine/threonine-protein kinase</keyword>
<keyword id="KW-0808">Transferase</keyword>
<gene>
    <name type="primary">CDC15</name>
    <name type="synonym">LYT1</name>
    <name type="ordered locus">YAR019C</name>
</gene>
<evidence type="ECO:0000255" key="1">
    <source>
        <dbReference type="PROSITE-ProRule" id="PRU00159"/>
    </source>
</evidence>
<evidence type="ECO:0000255" key="2">
    <source>
        <dbReference type="PROSITE-ProRule" id="PRU10027"/>
    </source>
</evidence>
<evidence type="ECO:0000256" key="3">
    <source>
        <dbReference type="SAM" id="MobiDB-lite"/>
    </source>
</evidence>
<evidence type="ECO:0000269" key="4">
    <source>
    </source>
</evidence>
<evidence type="ECO:0000269" key="5">
    <source>
    </source>
</evidence>
<evidence type="ECO:0000269" key="6">
    <source>
    </source>
</evidence>
<evidence type="ECO:0000269" key="7">
    <source>
    </source>
</evidence>
<evidence type="ECO:0000269" key="8">
    <source>
    </source>
</evidence>
<evidence type="ECO:0000269" key="9">
    <source>
    </source>
</evidence>
<evidence type="ECO:0000269" key="10">
    <source>
    </source>
</evidence>
<evidence type="ECO:0000269" key="11">
    <source>
    </source>
</evidence>
<evidence type="ECO:0000269" key="12">
    <source>
    </source>
</evidence>
<evidence type="ECO:0000269" key="13">
    <source>
    </source>
</evidence>
<evidence type="ECO:0000269" key="14">
    <source>
    </source>
</evidence>
<evidence type="ECO:0000269" key="15">
    <source>
    </source>
</evidence>
<evidence type="ECO:0000269" key="16">
    <source>
    </source>
</evidence>
<evidence type="ECO:0000269" key="17">
    <source>
    </source>
</evidence>
<evidence type="ECO:0000269" key="18">
    <source>
    </source>
</evidence>
<evidence type="ECO:0000269" key="19">
    <source>
    </source>
</evidence>
<evidence type="ECO:0000269" key="20">
    <source>
    </source>
</evidence>
<evidence type="ECO:0000269" key="21">
    <source>
    </source>
</evidence>
<evidence type="ECO:0000269" key="22">
    <source>
    </source>
</evidence>
<evidence type="ECO:0000269" key="23">
    <source>
    </source>
</evidence>
<evidence type="ECO:0000269" key="24">
    <source>
    </source>
</evidence>
<evidence type="ECO:0000269" key="25">
    <source>
    </source>
</evidence>
<evidence type="ECO:0000269" key="26">
    <source>
    </source>
</evidence>
<evidence type="ECO:0000269" key="27">
    <source>
    </source>
</evidence>
<evidence type="ECO:0000269" key="28">
    <source>
    </source>
</evidence>
<evidence type="ECO:0000269" key="29">
    <source>
    </source>
</evidence>
<evidence type="ECO:0000269" key="30">
    <source>
    </source>
</evidence>
<evidence type="ECO:0000305" key="31"/>
<evidence type="ECO:0007744" key="32">
    <source>
    </source>
</evidence>
<dbReference type="EC" id="2.7.11.1"/>
<dbReference type="EMBL" id="X60549">
    <property type="protein sequence ID" value="CAA43041.1"/>
    <property type="molecule type" value="Genomic_DNA"/>
</dbReference>
<dbReference type="EMBL" id="X52683">
    <property type="protein sequence ID" value="CAA36906.1"/>
    <property type="molecule type" value="Genomic_DNA"/>
</dbReference>
<dbReference type="EMBL" id="L22015">
    <property type="protein sequence ID" value="AAC04965.1"/>
    <property type="molecule type" value="Genomic_DNA"/>
</dbReference>
<dbReference type="EMBL" id="M67445">
    <property type="protein sequence ID" value="AAA34400.1"/>
    <property type="molecule type" value="Genomic_DNA"/>
</dbReference>
<dbReference type="EMBL" id="BK006935">
    <property type="protein sequence ID" value="DAA06996.2"/>
    <property type="molecule type" value="Genomic_DNA"/>
</dbReference>
<dbReference type="PIR" id="S15038">
    <property type="entry name" value="S15038"/>
</dbReference>
<dbReference type="RefSeq" id="NP_009411.2">
    <property type="nucleotide sequence ID" value="NM_001178218.2"/>
</dbReference>
<dbReference type="SMR" id="P27636"/>
<dbReference type="BioGRID" id="31801">
    <property type="interactions" value="424"/>
</dbReference>
<dbReference type="DIP" id="DIP-5728N"/>
<dbReference type="FunCoup" id="P27636">
    <property type="interactions" value="494"/>
</dbReference>
<dbReference type="IntAct" id="P27636">
    <property type="interactions" value="17"/>
</dbReference>
<dbReference type="MINT" id="P27636"/>
<dbReference type="STRING" id="4932.YAR019C"/>
<dbReference type="GlyGen" id="P27636">
    <property type="glycosylation" value="1 site"/>
</dbReference>
<dbReference type="iPTMnet" id="P27636"/>
<dbReference type="PaxDb" id="4932-YAR019C"/>
<dbReference type="PeptideAtlas" id="P27636"/>
<dbReference type="TopDownProteomics" id="P27636"/>
<dbReference type="EnsemblFungi" id="YAR019C_mRNA">
    <property type="protein sequence ID" value="YAR019C"/>
    <property type="gene ID" value="YAR019C"/>
</dbReference>
<dbReference type="GeneID" id="851274"/>
<dbReference type="KEGG" id="sce:YAR019C"/>
<dbReference type="AGR" id="SGD:S000000072"/>
<dbReference type="SGD" id="S000000072">
    <property type="gene designation" value="CDC15"/>
</dbReference>
<dbReference type="VEuPathDB" id="FungiDB:YAR019C"/>
<dbReference type="eggNOG" id="KOG0198">
    <property type="taxonomic scope" value="Eukaryota"/>
</dbReference>
<dbReference type="GeneTree" id="ENSGT00940000176374"/>
<dbReference type="HOGENOM" id="CLU_006413_0_0_1"/>
<dbReference type="InParanoid" id="P27636"/>
<dbReference type="OMA" id="KYHGFIQ"/>
<dbReference type="OrthoDB" id="8693905at2759"/>
<dbReference type="BioCyc" id="YEAST:G3O-28875-MONOMER"/>
<dbReference type="BRENDA" id="2.7.11.1">
    <property type="organism ID" value="984"/>
</dbReference>
<dbReference type="BioGRID-ORCS" id="851274">
    <property type="hits" value="1 hit in 13 CRISPR screens"/>
</dbReference>
<dbReference type="CD-CODE" id="876000F7">
    <property type="entry name" value="Centrosome"/>
</dbReference>
<dbReference type="CD-CODE" id="A777E0F8">
    <property type="entry name" value="P-body"/>
</dbReference>
<dbReference type="PRO" id="PR:P27636"/>
<dbReference type="Proteomes" id="UP000002311">
    <property type="component" value="Chromosome I"/>
</dbReference>
<dbReference type="RNAct" id="P27636">
    <property type="molecule type" value="protein"/>
</dbReference>
<dbReference type="GO" id="GO:0005935">
    <property type="term" value="C:cellular bud neck"/>
    <property type="evidence" value="ECO:0000314"/>
    <property type="project" value="SGD"/>
</dbReference>
<dbReference type="GO" id="GO:0005737">
    <property type="term" value="C:cytoplasm"/>
    <property type="evidence" value="ECO:0007005"/>
    <property type="project" value="SGD"/>
</dbReference>
<dbReference type="GO" id="GO:0000922">
    <property type="term" value="C:spindle pole"/>
    <property type="evidence" value="ECO:0007669"/>
    <property type="project" value="UniProtKB-SubCell"/>
</dbReference>
<dbReference type="GO" id="GO:0005816">
    <property type="term" value="C:spindle pole body"/>
    <property type="evidence" value="ECO:0000314"/>
    <property type="project" value="SGD"/>
</dbReference>
<dbReference type="GO" id="GO:0005524">
    <property type="term" value="F:ATP binding"/>
    <property type="evidence" value="ECO:0007669"/>
    <property type="project" value="UniProtKB-KW"/>
</dbReference>
<dbReference type="GO" id="GO:0004672">
    <property type="term" value="F:protein kinase activity"/>
    <property type="evidence" value="ECO:0007005"/>
    <property type="project" value="SGD"/>
</dbReference>
<dbReference type="GO" id="GO:0106310">
    <property type="term" value="F:protein serine kinase activity"/>
    <property type="evidence" value="ECO:0007669"/>
    <property type="project" value="RHEA"/>
</dbReference>
<dbReference type="GO" id="GO:0004674">
    <property type="term" value="F:protein serine/threonine kinase activity"/>
    <property type="evidence" value="ECO:0000314"/>
    <property type="project" value="SGD"/>
</dbReference>
<dbReference type="GO" id="GO:0051229">
    <property type="term" value="P:meiotic spindle disassembly"/>
    <property type="evidence" value="ECO:0000315"/>
    <property type="project" value="SGD"/>
</dbReference>
<dbReference type="GO" id="GO:0000281">
    <property type="term" value="P:mitotic cytokinesis"/>
    <property type="evidence" value="ECO:0000315"/>
    <property type="project" value="SGD"/>
</dbReference>
<dbReference type="GO" id="GO:1904750">
    <property type="term" value="P:negative regulation of protein localization to nucleolus"/>
    <property type="evidence" value="ECO:0000315"/>
    <property type="project" value="SGD"/>
</dbReference>
<dbReference type="GO" id="GO:1903024">
    <property type="term" value="P:positive regulation of ascospore-type prospore membrane formation"/>
    <property type="evidence" value="ECO:0000315"/>
    <property type="project" value="SGD"/>
</dbReference>
<dbReference type="GO" id="GO:0007096">
    <property type="term" value="P:regulation of exit from mitosis"/>
    <property type="evidence" value="ECO:0000315"/>
    <property type="project" value="SGD"/>
</dbReference>
<dbReference type="FunFam" id="1.10.510.10:FF:001041">
    <property type="entry name" value="Cdc15p"/>
    <property type="match status" value="1"/>
</dbReference>
<dbReference type="Gene3D" id="1.10.510.10">
    <property type="entry name" value="Transferase(Phosphotransferase) domain 1"/>
    <property type="match status" value="1"/>
</dbReference>
<dbReference type="InterPro" id="IPR011009">
    <property type="entry name" value="Kinase-like_dom_sf"/>
</dbReference>
<dbReference type="InterPro" id="IPR000719">
    <property type="entry name" value="Prot_kinase_dom"/>
</dbReference>
<dbReference type="InterPro" id="IPR017441">
    <property type="entry name" value="Protein_kinase_ATP_BS"/>
</dbReference>
<dbReference type="InterPro" id="IPR008271">
    <property type="entry name" value="Ser/Thr_kinase_AS"/>
</dbReference>
<dbReference type="InterPro" id="IPR050629">
    <property type="entry name" value="STE20/SPS1-PAK"/>
</dbReference>
<dbReference type="PANTHER" id="PTHR48012:SF26">
    <property type="entry name" value="SERINE_THREONINE-PROTEIN KINASE DDB_G0283821-RELATED"/>
    <property type="match status" value="1"/>
</dbReference>
<dbReference type="PANTHER" id="PTHR48012">
    <property type="entry name" value="STERILE20-LIKE KINASE, ISOFORM B-RELATED"/>
    <property type="match status" value="1"/>
</dbReference>
<dbReference type="Pfam" id="PF00069">
    <property type="entry name" value="Pkinase"/>
    <property type="match status" value="1"/>
</dbReference>
<dbReference type="SMART" id="SM00220">
    <property type="entry name" value="S_TKc"/>
    <property type="match status" value="1"/>
</dbReference>
<dbReference type="SUPFAM" id="SSF56112">
    <property type="entry name" value="Protein kinase-like (PK-like)"/>
    <property type="match status" value="1"/>
</dbReference>
<dbReference type="PROSITE" id="PS00107">
    <property type="entry name" value="PROTEIN_KINASE_ATP"/>
    <property type="match status" value="1"/>
</dbReference>
<dbReference type="PROSITE" id="PS50011">
    <property type="entry name" value="PROTEIN_KINASE_DOM"/>
    <property type="match status" value="1"/>
</dbReference>
<dbReference type="PROSITE" id="PS00108">
    <property type="entry name" value="PROTEIN_KINASE_ST"/>
    <property type="match status" value="1"/>
</dbReference>
<feature type="chain" id="PRO_0000085717" description="Cell division control protein 15">
    <location>
        <begin position="1"/>
        <end position="974"/>
    </location>
</feature>
<feature type="domain" description="Protein kinase" evidence="1">
    <location>
        <begin position="25"/>
        <end position="272"/>
    </location>
</feature>
<feature type="region of interest" description="Self association domain">
    <location>
        <begin position="360"/>
        <end position="702"/>
    </location>
</feature>
<feature type="region of interest" description="Disordered" evidence="3">
    <location>
        <begin position="554"/>
        <end position="592"/>
    </location>
</feature>
<feature type="region of interest" description="Auto-inhibitory domain">
    <location>
        <begin position="751"/>
        <end position="974"/>
    </location>
</feature>
<feature type="region of interest" description="Disordered" evidence="3">
    <location>
        <begin position="941"/>
        <end position="974"/>
    </location>
</feature>
<feature type="compositionally biased region" description="Low complexity" evidence="3">
    <location>
        <begin position="554"/>
        <end position="563"/>
    </location>
</feature>
<feature type="compositionally biased region" description="Polar residues" evidence="3">
    <location>
        <begin position="564"/>
        <end position="579"/>
    </location>
</feature>
<feature type="compositionally biased region" description="Basic and acidic residues" evidence="3">
    <location>
        <begin position="948"/>
        <end position="963"/>
    </location>
</feature>
<feature type="active site" description="Proton acceptor" evidence="1 2">
    <location>
        <position position="146"/>
    </location>
</feature>
<feature type="binding site" evidence="1">
    <location>
        <begin position="31"/>
        <end position="39"/>
    </location>
    <ligand>
        <name>ATP</name>
        <dbReference type="ChEBI" id="CHEBI:30616"/>
    </ligand>
</feature>
<feature type="binding site" evidence="1">
    <location>
        <position position="54"/>
    </location>
    <ligand>
        <name>ATP</name>
        <dbReference type="ChEBI" id="CHEBI:30616"/>
    </ligand>
</feature>
<feature type="modified residue" description="Phosphoserine" evidence="22">
    <location>
        <position position="561"/>
    </location>
</feature>
<feature type="modified residue" description="Phosphoserine" evidence="22 32">
    <location>
        <position position="567"/>
    </location>
</feature>
<feature type="modified residue" description="Phosphothreonine" evidence="22">
    <location>
        <position position="870"/>
    </location>
</feature>
<feature type="sequence conflict" description="In Ref. 1; CAA43041, 2; CAA36906, 4 and 5; AAC04965." evidence="31" ref="1 2 4 5">
    <original>A</original>
    <variation>R</variation>
    <location>
        <position position="316"/>
    </location>
</feature>
<feature type="sequence conflict" description="In Ref. 1; CAA43041, 2; CAA36906, 4 and 5; AAC04965." evidence="31" ref="1 2 4 5">
    <original>A</original>
    <variation>P</variation>
    <location>
        <position position="321"/>
    </location>
</feature>
<feature type="sequence conflict" description="In Ref. 4; no nucleotide entry and 5; AAC04965." evidence="31" ref="4 5">
    <original>KDV</original>
    <variation>NGC</variation>
    <location>
        <begin position="900"/>
        <end position="902"/>
    </location>
</feature>
<protein>
    <recommendedName>
        <fullName>Cell division control protein 15</fullName>
        <ecNumber>2.7.11.1</ecNumber>
    </recommendedName>
</protein>
<organism>
    <name type="scientific">Saccharomyces cerevisiae (strain ATCC 204508 / S288c)</name>
    <name type="common">Baker's yeast</name>
    <dbReference type="NCBI Taxonomy" id="559292"/>
    <lineage>
        <taxon>Eukaryota</taxon>
        <taxon>Fungi</taxon>
        <taxon>Dikarya</taxon>
        <taxon>Ascomycota</taxon>
        <taxon>Saccharomycotina</taxon>
        <taxon>Saccharomycetes</taxon>
        <taxon>Saccharomycetales</taxon>
        <taxon>Saccharomycetaceae</taxon>
        <taxon>Saccharomyces</taxon>
    </lineage>
</organism>
<sequence>MNSMADTDRVNLTPIQRASEKSVQYHLKQVIGRGSYGVVYKAINKHTDQVVAIKEVVYENDEELNDIMAEISLLKNLNHNNIVKYHGFIRKSYELYILLEYCANGSLRRLISRSSTGLSENESKTYVTQTLLGLKYLHGEGVIHRDIKAANILLSADNTVKLADFGVSTIVNSSALTLAGTLNWMAPEILGNRGASTLSDIWSLGATVVEMLTKNPPYHNLTDANIYYAVENDTYYPPSSFSEPLKDFLSKCFVKNMYKRPTADQLLKHVWINSTENVKVDKLNKFKEDFTDADYHWDADFQEEKLNISPSKFSLAAAPAAWAENNQELDLMPPTESQLLSQLKSSSKPLTDLHVLFSVCSLENIADTIIECLSRTTVDKRLITAFGSIFVYDTQHNHSRLRLKFIAMGGIPLIIKFEHLAKEFVIDYPQTLIECGIMYPPNFASLKTPKYILELVYRFYDLTSTAFWCRWCFKHLDISLLLNNIHERRAQSILLKLSSYAPWSFEKILPSLIDSKLKKKILISPQITYVVFKSINYMITTNDDKIHKSAIPSSSSLPLSSSPTRNSPVNSVQSPSRSPVHSLMATRPSSPMRHKSISNFPHLTISSKSRLLIELPEGFFTWLTSFFVDMAQIKDLSVLKYFTKLCYLTVHINSTFLNDLLDNDAFFAFIRNIDTIIPFIDDAKTAAFIWKQITAICVEMSLDMDQMSASLFSTAMNFIRKKNNTSISGLEIILNCLHFTLRNVNDDVAPTVGSSESHSVFLIKVNNDAAIELPIDQLVDLFYALNDDDVNLSKLISIFTKICSLPGFENLTINIIFHPNFYEKIVSFFDTYFNSLLIQIDLLKFIKLIFSKSLLKLYDYTGQPDPIKQTEPNRRNKATVFKLRAILVQITEFLNNNWNKDVPKRNSNQVGGDSVLICQLCEDIRSLSKKGSLQKVSSVTAAIGSSPTKDERSNLRSSKDKSDGFSVPITTFQT</sequence>
<name>CDC15_YEAST</name>
<comment type="function">
    <text evidence="4 5 7 8 9 10 11 12 13 15 16 17 18 19 20 21 23 24 26 27 28 29 30">Protein kinase of the mitotic exit network (MEN) essential for late nuclear division in the mitotic cycle. Promotes mitotic exit by phosphorylating DBF2 and directly switching on DBF2 kinase activity. Involved in the localization of DBF2 and DBF20 to the neck which is necessary to undergo cytokinesis. Plays a role in segregation of chromosomes during recovery from spindle checkpoint activation. Required for spindle pole localization of CDK1 and inactivation of CDC2 kinase activity at the end of mitosis. Required for spindle disassembly after meiosis II and plays a role in spore morphogenesis.</text>
</comment>
<comment type="catalytic activity">
    <reaction>
        <text>L-seryl-[protein] + ATP = O-phospho-L-seryl-[protein] + ADP + H(+)</text>
        <dbReference type="Rhea" id="RHEA:17989"/>
        <dbReference type="Rhea" id="RHEA-COMP:9863"/>
        <dbReference type="Rhea" id="RHEA-COMP:11604"/>
        <dbReference type="ChEBI" id="CHEBI:15378"/>
        <dbReference type="ChEBI" id="CHEBI:29999"/>
        <dbReference type="ChEBI" id="CHEBI:30616"/>
        <dbReference type="ChEBI" id="CHEBI:83421"/>
        <dbReference type="ChEBI" id="CHEBI:456216"/>
        <dbReference type="EC" id="2.7.11.1"/>
    </reaction>
</comment>
<comment type="catalytic activity">
    <reaction>
        <text>L-threonyl-[protein] + ATP = O-phospho-L-threonyl-[protein] + ADP + H(+)</text>
        <dbReference type="Rhea" id="RHEA:46608"/>
        <dbReference type="Rhea" id="RHEA-COMP:11060"/>
        <dbReference type="Rhea" id="RHEA-COMP:11605"/>
        <dbReference type="ChEBI" id="CHEBI:15378"/>
        <dbReference type="ChEBI" id="CHEBI:30013"/>
        <dbReference type="ChEBI" id="CHEBI:30616"/>
        <dbReference type="ChEBI" id="CHEBI:61977"/>
        <dbReference type="ChEBI" id="CHEBI:456216"/>
        <dbReference type="EC" id="2.7.11.1"/>
    </reaction>
</comment>
<comment type="activity regulation">
    <text evidence="6">Kinase activity is inhibited by phosphorylation and activated by dephosphorylation by CDC14.</text>
</comment>
<comment type="subunit">
    <text evidence="8 12">Homodimer. Interacts with TEM1.</text>
</comment>
<comment type="interaction">
    <interactant intactId="EBI-4200">
        <id>P27636</id>
    </interactant>
    <interactant intactId="EBI-19113">
        <id>P38987</id>
        <label>TEM1</label>
    </interactant>
    <organismsDiffer>false</organismsDiffer>
    <experiments>6</experiments>
</comment>
<comment type="subcellular location">
    <subcellularLocation>
        <location>Cytoplasm</location>
        <location>Cytoskeleton</location>
        <location>Spindle pole</location>
    </subcellularLocation>
    <subcellularLocation>
        <location>Bud neck</location>
    </subcellularLocation>
    <text>Localizes to the spindle pole bodies at late anaphase and translocates to the cytoplasm upon DNA replication stress. Localization to SPBs depends on CDC5 and TEM1 and is inhibited by BUB2. Accumulates at the daughter SPB after anaphase onset when the daughter SPB begins to penetrate the bud neck. Not found in the mother SPD during early anaphase. As anaphase proceeds, continues to accumulate on the daughter SPB and also localizes to the mother SPB. At the end of telophase, a portion of CDC15 localizes at the mother-bud neck.</text>
</comment>
<comment type="induction">
    <text evidence="25">Constitutively expressed.</text>
</comment>
<comment type="domain">
    <text evidence="12">The region between residues 360 and 702 is essential for function and is required for self-association and for binding to spindle pole bodies.</text>
</comment>
<comment type="domain">
    <text evidence="12">The region between residues 751 and 974 is an auto-inhibitory domain which inhibits MEN signaling.</text>
</comment>
<comment type="PTM">
    <text evidence="5 6 7 17 22">Phosphorylation by CDK1 reduces the binding to the mother spindle pole body. The extent of phosphorylation gradually increases during cell-cycle progression until some point during late anaphase/telophase when it is rapidly dephosphorylated by CDC14. Phosphorylation inhibits kinase activity and dephosphorylation by CDC14 activates CDC15.</text>
</comment>
<comment type="miscellaneous">
    <text evidence="14">Present with 238 molecules/cell in log phase SD medium.</text>
</comment>
<comment type="similarity">
    <text evidence="1">Belongs to the protein kinase superfamily. Ser/Thr protein kinase family.</text>
</comment>
<comment type="caution">
    <text evidence="31">It is uncertain whether Met-1 or Met-4 is the initiator.</text>
</comment>
<proteinExistence type="evidence at protein level"/>